<proteinExistence type="inferred from homology"/>
<accession>Q7ME60</accession>
<protein>
    <recommendedName>
        <fullName evidence="1">Cobyric acid synthase</fullName>
    </recommendedName>
</protein>
<comment type="function">
    <text evidence="1">Catalyzes amidations at positions B, D, E, and G on adenosylcobyrinic A,C-diamide. NH(2) groups are provided by glutamine, and one molecule of ATP is hydrogenolyzed for each amidation.</text>
</comment>
<comment type="pathway">
    <text evidence="1">Cofactor biosynthesis; adenosylcobalamin biosynthesis.</text>
</comment>
<comment type="similarity">
    <text evidence="1">Belongs to the CobB/CobQ family. CobQ subfamily.</text>
</comment>
<name>COBQ_VIBVY</name>
<dbReference type="EMBL" id="BA000038">
    <property type="protein sequence ID" value="BAC96850.1"/>
    <property type="molecule type" value="Genomic_DNA"/>
</dbReference>
<dbReference type="RefSeq" id="WP_011152137.1">
    <property type="nucleotide sequence ID" value="NC_005140.1"/>
</dbReference>
<dbReference type="SMR" id="Q7ME60"/>
<dbReference type="STRING" id="672.VV93_v1c38310"/>
<dbReference type="KEGG" id="vvy:VVA0824"/>
<dbReference type="PATRIC" id="fig|196600.6.peg.4008"/>
<dbReference type="eggNOG" id="COG1492">
    <property type="taxonomic scope" value="Bacteria"/>
</dbReference>
<dbReference type="HOGENOM" id="CLU_019250_2_2_6"/>
<dbReference type="UniPathway" id="UPA00148"/>
<dbReference type="Proteomes" id="UP000002675">
    <property type="component" value="Chromosome II"/>
</dbReference>
<dbReference type="GO" id="GO:0015420">
    <property type="term" value="F:ABC-type vitamin B12 transporter activity"/>
    <property type="evidence" value="ECO:0007669"/>
    <property type="project" value="UniProtKB-UniRule"/>
</dbReference>
<dbReference type="GO" id="GO:0003824">
    <property type="term" value="F:catalytic activity"/>
    <property type="evidence" value="ECO:0007669"/>
    <property type="project" value="InterPro"/>
</dbReference>
<dbReference type="GO" id="GO:0009236">
    <property type="term" value="P:cobalamin biosynthetic process"/>
    <property type="evidence" value="ECO:0007669"/>
    <property type="project" value="UniProtKB-UniRule"/>
</dbReference>
<dbReference type="CDD" id="cd05389">
    <property type="entry name" value="CobQ_N"/>
    <property type="match status" value="1"/>
</dbReference>
<dbReference type="CDD" id="cd01750">
    <property type="entry name" value="GATase1_CobQ"/>
    <property type="match status" value="1"/>
</dbReference>
<dbReference type="Gene3D" id="3.40.50.880">
    <property type="match status" value="1"/>
</dbReference>
<dbReference type="Gene3D" id="3.40.50.300">
    <property type="entry name" value="P-loop containing nucleotide triphosphate hydrolases"/>
    <property type="match status" value="1"/>
</dbReference>
<dbReference type="HAMAP" id="MF_00028">
    <property type="entry name" value="CobQ"/>
    <property type="match status" value="1"/>
</dbReference>
<dbReference type="InterPro" id="IPR029062">
    <property type="entry name" value="Class_I_gatase-like"/>
</dbReference>
<dbReference type="InterPro" id="IPR002586">
    <property type="entry name" value="CobQ/CobB/MinD/ParA_Nub-bd_dom"/>
</dbReference>
<dbReference type="InterPro" id="IPR033949">
    <property type="entry name" value="CobQ_GATase1"/>
</dbReference>
<dbReference type="InterPro" id="IPR047045">
    <property type="entry name" value="CobQ_N"/>
</dbReference>
<dbReference type="InterPro" id="IPR004459">
    <property type="entry name" value="CobQ_synth"/>
</dbReference>
<dbReference type="InterPro" id="IPR011698">
    <property type="entry name" value="GATase_3"/>
</dbReference>
<dbReference type="InterPro" id="IPR027417">
    <property type="entry name" value="P-loop_NTPase"/>
</dbReference>
<dbReference type="NCBIfam" id="TIGR00313">
    <property type="entry name" value="cobQ"/>
    <property type="match status" value="1"/>
</dbReference>
<dbReference type="NCBIfam" id="NF001989">
    <property type="entry name" value="PRK00784.1"/>
    <property type="match status" value="1"/>
</dbReference>
<dbReference type="PANTHER" id="PTHR21343:SF1">
    <property type="entry name" value="COBYRIC ACID SYNTHASE"/>
    <property type="match status" value="1"/>
</dbReference>
<dbReference type="PANTHER" id="PTHR21343">
    <property type="entry name" value="DETHIOBIOTIN SYNTHETASE"/>
    <property type="match status" value="1"/>
</dbReference>
<dbReference type="Pfam" id="PF01656">
    <property type="entry name" value="CbiA"/>
    <property type="match status" value="1"/>
</dbReference>
<dbReference type="Pfam" id="PF07685">
    <property type="entry name" value="GATase_3"/>
    <property type="match status" value="1"/>
</dbReference>
<dbReference type="SUPFAM" id="SSF52317">
    <property type="entry name" value="Class I glutamine amidotransferase-like"/>
    <property type="match status" value="1"/>
</dbReference>
<dbReference type="SUPFAM" id="SSF52540">
    <property type="entry name" value="P-loop containing nucleoside triphosphate hydrolases"/>
    <property type="match status" value="1"/>
</dbReference>
<dbReference type="PROSITE" id="PS51274">
    <property type="entry name" value="GATASE_COBBQ"/>
    <property type="match status" value="1"/>
</dbReference>
<evidence type="ECO:0000255" key="1">
    <source>
        <dbReference type="HAMAP-Rule" id="MF_00028"/>
    </source>
</evidence>
<keyword id="KW-0169">Cobalamin biosynthesis</keyword>
<keyword id="KW-0315">Glutamine amidotransferase</keyword>
<feature type="chain" id="PRO_0000141342" description="Cobyric acid synthase">
    <location>
        <begin position="1"/>
        <end position="480"/>
    </location>
</feature>
<feature type="domain" description="GATase cobBQ-type" evidence="1">
    <location>
        <begin position="249"/>
        <end position="436"/>
    </location>
</feature>
<feature type="active site" description="Nucleophile" evidence="1">
    <location>
        <position position="330"/>
    </location>
</feature>
<feature type="active site" evidence="1">
    <location>
        <position position="428"/>
    </location>
</feature>
<reference key="1">
    <citation type="journal article" date="2003" name="Genome Res.">
        <title>Comparative genome analysis of Vibrio vulnificus, a marine pathogen.</title>
        <authorList>
            <person name="Chen C.-Y."/>
            <person name="Wu K.-M."/>
            <person name="Chang Y.-C."/>
            <person name="Chang C.-H."/>
            <person name="Tsai H.-C."/>
            <person name="Liao T.-L."/>
            <person name="Liu Y.-M."/>
            <person name="Chen H.-J."/>
            <person name="Shen A.B.-T."/>
            <person name="Li J.-C."/>
            <person name="Su T.-L."/>
            <person name="Shao C.-P."/>
            <person name="Lee C.-T."/>
            <person name="Hor L.-I."/>
            <person name="Tsai S.-F."/>
        </authorList>
    </citation>
    <scope>NUCLEOTIDE SEQUENCE [LARGE SCALE GENOMIC DNA]</scope>
    <source>
        <strain>YJ016</strain>
    </source>
</reference>
<sequence length="480" mass="52582">MKKLLMVQGTTSDAGKSVLVAGLCRVLARKGVKVAPFKPQNMALNSAVTKEGGEIGRAQAVQAQACRIEPSVHMNPVLIKPNSDTGAQIILQGKALTNMDAYGFHNYKKVAMDTVMDSFARLKDEYQAIMIEGAGSPAEINLRQNDIANMGFAEEADVPVIIVADIDRGGVFAHLYGTLALLSPSEQARVKGFVINRFRGDIKLLESGLDWLEEKTGKPVIGVLPFLHGLNLEAEDAITSQQALSDEVKLKVVVPVLTRISNHTDFDVLRLHPQIDLRYVGKGERLEHADLIILPGSKSVRDDLRYLREQGWDKDILRHLRFGGKVLGICGGYQMLGESIRDPFGVEGEPGESVGLGLLKTRTELTQDKCLINTKGQLSLNGKHVNVTGYEIHVGRSQVNEYQPITKDDGQLEGALSECGQIMGSYLHGFLDSEAALELICEWVNGVRIKAQNHQQLKEQAIDRIADAIEEHLDLSQLGI</sequence>
<organism>
    <name type="scientific">Vibrio vulnificus (strain YJ016)</name>
    <dbReference type="NCBI Taxonomy" id="196600"/>
    <lineage>
        <taxon>Bacteria</taxon>
        <taxon>Pseudomonadati</taxon>
        <taxon>Pseudomonadota</taxon>
        <taxon>Gammaproteobacteria</taxon>
        <taxon>Vibrionales</taxon>
        <taxon>Vibrionaceae</taxon>
        <taxon>Vibrio</taxon>
    </lineage>
</organism>
<gene>
    <name evidence="1" type="primary">cobQ</name>
    <name type="ordered locus">VVA0824</name>
</gene>